<name>CDKL1_HUMAN</name>
<dbReference type="EC" id="2.7.11.22"/>
<dbReference type="EMBL" id="X66358">
    <property type="protein sequence ID" value="CAA47002.1"/>
    <property type="status" value="ALT_INIT"/>
    <property type="molecule type" value="mRNA"/>
</dbReference>
<dbReference type="EMBL" id="X66359">
    <property type="protein sequence ID" value="CAA47002.1"/>
    <property type="status" value="JOINED"/>
    <property type="molecule type" value="mRNA"/>
</dbReference>
<dbReference type="EMBL" id="AF390028">
    <property type="protein sequence ID" value="AAL58838.1"/>
    <property type="molecule type" value="mRNA"/>
</dbReference>
<dbReference type="EMBL" id="AY525548">
    <property type="protein sequence ID" value="AAS00095.1"/>
    <property type="status" value="ALT_INIT"/>
    <property type="molecule type" value="Genomic_DNA"/>
</dbReference>
<dbReference type="EMBL" id="AL118556">
    <property type="status" value="NOT_ANNOTATED_CDS"/>
    <property type="molecule type" value="Genomic_DNA"/>
</dbReference>
<dbReference type="EMBL" id="AL359397">
    <property type="status" value="NOT_ANNOTATED_CDS"/>
    <property type="molecule type" value="Genomic_DNA"/>
</dbReference>
<dbReference type="EMBL" id="AK308732">
    <property type="status" value="NOT_ANNOTATED_CDS"/>
    <property type="molecule type" value="mRNA"/>
</dbReference>
<dbReference type="EMBL" id="BC104977">
    <property type="protein sequence ID" value="AAI04978.1"/>
    <property type="status" value="ALT_INIT"/>
    <property type="molecule type" value="mRNA"/>
</dbReference>
<dbReference type="CCDS" id="CCDS73637.1">
    <molecule id="Q00532-3"/>
</dbReference>
<dbReference type="CCDS" id="CCDS9699.2">
    <molecule id="Q00532-1"/>
</dbReference>
<dbReference type="PIR" id="S22745">
    <property type="entry name" value="S22745"/>
</dbReference>
<dbReference type="PIR" id="S23383">
    <property type="entry name" value="S23383"/>
</dbReference>
<dbReference type="RefSeq" id="NP_001269165.2">
    <molecule id="Q00532-3"/>
    <property type="nucleotide sequence ID" value="NM_001282236.3"/>
</dbReference>
<dbReference type="RefSeq" id="NP_001410690.1">
    <molecule id="Q00532-1"/>
    <property type="nucleotide sequence ID" value="NM_001423761.1"/>
</dbReference>
<dbReference type="RefSeq" id="NP_001410691.1">
    <molecule id="Q00532-1"/>
    <property type="nucleotide sequence ID" value="NM_001423762.1"/>
</dbReference>
<dbReference type="RefSeq" id="NP_001410692.1">
    <molecule id="Q00532-1"/>
    <property type="nucleotide sequence ID" value="NM_001423763.1"/>
</dbReference>
<dbReference type="RefSeq" id="NP_004187.2">
    <molecule id="Q00532-1"/>
    <property type="nucleotide sequence ID" value="NM_004196.4"/>
</dbReference>
<dbReference type="RefSeq" id="XP_005268214.1">
    <property type="nucleotide sequence ID" value="XM_005268157.2"/>
</dbReference>
<dbReference type="RefSeq" id="XP_016877218.1">
    <property type="nucleotide sequence ID" value="XM_017021729.1"/>
</dbReference>
<dbReference type="PDB" id="4AGU">
    <property type="method" value="X-ray"/>
    <property type="resolution" value="2.40 A"/>
    <property type="chains" value="A/B/C=1-299"/>
</dbReference>
<dbReference type="PDBsum" id="4AGU"/>
<dbReference type="SMR" id="Q00532"/>
<dbReference type="BioGRID" id="114341">
    <property type="interactions" value="22"/>
</dbReference>
<dbReference type="FunCoup" id="Q00532">
    <property type="interactions" value="1140"/>
</dbReference>
<dbReference type="IntAct" id="Q00532">
    <property type="interactions" value="24"/>
</dbReference>
<dbReference type="MINT" id="Q00532"/>
<dbReference type="STRING" id="9606.ENSP00000379176"/>
<dbReference type="BindingDB" id="Q00532"/>
<dbReference type="ChEMBL" id="CHEMBL5789"/>
<dbReference type="DrugBank" id="DB12010">
    <property type="generic name" value="Fostamatinib"/>
</dbReference>
<dbReference type="DrugCentral" id="Q00532"/>
<dbReference type="GuidetoPHARMACOLOGY" id="1982"/>
<dbReference type="GlyGen" id="Q00532">
    <property type="glycosylation" value="1 site, 1 O-linked glycan (1 site)"/>
</dbReference>
<dbReference type="iPTMnet" id="Q00532"/>
<dbReference type="PhosphoSitePlus" id="Q00532"/>
<dbReference type="BioMuta" id="CDKL1"/>
<dbReference type="DMDM" id="229463050"/>
<dbReference type="CPTAC" id="non-CPTAC-6018"/>
<dbReference type="CPTAC" id="non-CPTAC-6019"/>
<dbReference type="jPOST" id="Q00532"/>
<dbReference type="MassIVE" id="Q00532"/>
<dbReference type="PaxDb" id="9606-ENSP00000379176"/>
<dbReference type="PeptideAtlas" id="Q00532"/>
<dbReference type="ProteomicsDB" id="57849">
    <molecule id="Q00532-1"/>
</dbReference>
<dbReference type="ProteomicsDB" id="57850">
    <molecule id="Q00532-2"/>
</dbReference>
<dbReference type="Antibodypedia" id="23644">
    <property type="antibodies" value="361 antibodies from 29 providers"/>
</dbReference>
<dbReference type="DNASU" id="8814"/>
<dbReference type="Ensembl" id="ENST00000395834.6">
    <molecule id="Q00532-1"/>
    <property type="protein sequence ID" value="ENSP00000379176.2"/>
    <property type="gene ID" value="ENSG00000100490.10"/>
</dbReference>
<dbReference type="GeneID" id="8814"/>
<dbReference type="KEGG" id="hsa:8814"/>
<dbReference type="MANE-Select" id="ENST00000395834.6">
    <property type="protein sequence ID" value="ENSP00000379176.2"/>
    <property type="RefSeq nucleotide sequence ID" value="NM_004196.7"/>
    <property type="RefSeq protein sequence ID" value="NP_004187.3"/>
</dbReference>
<dbReference type="UCSC" id="uc001wxz.5">
    <molecule id="Q00532-1"/>
    <property type="organism name" value="human"/>
</dbReference>
<dbReference type="UCSC" id="uc032bbp.2">
    <property type="organism name" value="human"/>
</dbReference>
<dbReference type="AGR" id="HGNC:1781"/>
<dbReference type="CTD" id="8814"/>
<dbReference type="DisGeNET" id="8814"/>
<dbReference type="GeneCards" id="CDKL1"/>
<dbReference type="HGNC" id="HGNC:1781">
    <property type="gene designation" value="CDKL1"/>
</dbReference>
<dbReference type="HPA" id="ENSG00000100490">
    <property type="expression patterns" value="Low tissue specificity"/>
</dbReference>
<dbReference type="MIM" id="603441">
    <property type="type" value="gene"/>
</dbReference>
<dbReference type="neXtProt" id="NX_Q00532"/>
<dbReference type="OpenTargets" id="ENSG00000100490"/>
<dbReference type="PharmGKB" id="PA26317"/>
<dbReference type="VEuPathDB" id="HostDB:ENSG00000100490"/>
<dbReference type="eggNOG" id="KOG0593">
    <property type="taxonomic scope" value="Eukaryota"/>
</dbReference>
<dbReference type="GeneTree" id="ENSGT00940000159132"/>
<dbReference type="InParanoid" id="Q00532"/>
<dbReference type="OMA" id="LHSTHYN"/>
<dbReference type="OrthoDB" id="548217at2759"/>
<dbReference type="PAN-GO" id="Q00532">
    <property type="GO annotations" value="3 GO annotations based on evolutionary models"/>
</dbReference>
<dbReference type="PhylomeDB" id="Q00532"/>
<dbReference type="TreeFam" id="TF101031"/>
<dbReference type="BRENDA" id="2.7.11.22">
    <property type="organism ID" value="2681"/>
</dbReference>
<dbReference type="PathwayCommons" id="Q00532"/>
<dbReference type="SignaLink" id="Q00532"/>
<dbReference type="SIGNOR" id="Q00532"/>
<dbReference type="BioGRID-ORCS" id="8814">
    <property type="hits" value="9 hits in 1192 CRISPR screens"/>
</dbReference>
<dbReference type="ChiTaRS" id="CDKL1">
    <property type="organism name" value="human"/>
</dbReference>
<dbReference type="EvolutionaryTrace" id="Q00532"/>
<dbReference type="GenomeRNAi" id="8814"/>
<dbReference type="Pharos" id="Q00532">
    <property type="development level" value="Tchem"/>
</dbReference>
<dbReference type="PRO" id="PR:Q00532"/>
<dbReference type="Proteomes" id="UP000005640">
    <property type="component" value="Chromosome 14"/>
</dbReference>
<dbReference type="RNAct" id="Q00532">
    <property type="molecule type" value="protein"/>
</dbReference>
<dbReference type="Bgee" id="ENSG00000100490">
    <property type="expression patterns" value="Expressed in right uterine tube and 120 other cell types or tissues"/>
</dbReference>
<dbReference type="ExpressionAtlas" id="Q00532">
    <property type="expression patterns" value="baseline and differential"/>
</dbReference>
<dbReference type="GO" id="GO:0035869">
    <property type="term" value="C:ciliary transition zone"/>
    <property type="evidence" value="ECO:0000250"/>
    <property type="project" value="UniProtKB"/>
</dbReference>
<dbReference type="GO" id="GO:0005737">
    <property type="term" value="C:cytoplasm"/>
    <property type="evidence" value="ECO:0007669"/>
    <property type="project" value="UniProtKB-SubCell"/>
</dbReference>
<dbReference type="GO" id="GO:0070062">
    <property type="term" value="C:extracellular exosome"/>
    <property type="evidence" value="ECO:0007005"/>
    <property type="project" value="UniProtKB"/>
</dbReference>
<dbReference type="GO" id="GO:0043231">
    <property type="term" value="C:intracellular membrane-bounded organelle"/>
    <property type="evidence" value="ECO:0000314"/>
    <property type="project" value="HPA"/>
</dbReference>
<dbReference type="GO" id="GO:0005654">
    <property type="term" value="C:nucleoplasm"/>
    <property type="evidence" value="ECO:0000314"/>
    <property type="project" value="HPA"/>
</dbReference>
<dbReference type="GO" id="GO:0005634">
    <property type="term" value="C:nucleus"/>
    <property type="evidence" value="ECO:0000318"/>
    <property type="project" value="GO_Central"/>
</dbReference>
<dbReference type="GO" id="GO:0005524">
    <property type="term" value="F:ATP binding"/>
    <property type="evidence" value="ECO:0007669"/>
    <property type="project" value="UniProtKB-KW"/>
</dbReference>
<dbReference type="GO" id="GO:0004693">
    <property type="term" value="F:cyclin-dependent protein serine/threonine kinase activity"/>
    <property type="evidence" value="ECO:0000304"/>
    <property type="project" value="ProtInc"/>
</dbReference>
<dbReference type="GO" id="GO:0106310">
    <property type="term" value="F:protein serine kinase activity"/>
    <property type="evidence" value="ECO:0007669"/>
    <property type="project" value="RHEA"/>
</dbReference>
<dbReference type="GO" id="GO:0004674">
    <property type="term" value="F:protein serine/threonine kinase activity"/>
    <property type="evidence" value="ECO:0000318"/>
    <property type="project" value="GO_Central"/>
</dbReference>
<dbReference type="GO" id="GO:0007507">
    <property type="term" value="P:heart development"/>
    <property type="evidence" value="ECO:0007669"/>
    <property type="project" value="Ensembl"/>
</dbReference>
<dbReference type="GO" id="GO:0006468">
    <property type="term" value="P:protein phosphorylation"/>
    <property type="evidence" value="ECO:0000304"/>
    <property type="project" value="ProtInc"/>
</dbReference>
<dbReference type="GO" id="GO:1902017">
    <property type="term" value="P:regulation of cilium assembly"/>
    <property type="evidence" value="ECO:0000250"/>
    <property type="project" value="UniProtKB"/>
</dbReference>
<dbReference type="CDD" id="cd07847">
    <property type="entry name" value="STKc_CDKL1_4"/>
    <property type="match status" value="1"/>
</dbReference>
<dbReference type="FunFam" id="1.10.510.10:FF:000191">
    <property type="entry name" value="cyclin-dependent kinase-like 1 isoform X1"/>
    <property type="match status" value="1"/>
</dbReference>
<dbReference type="FunFam" id="3.30.200.20:FF:000049">
    <property type="entry name" value="cyclin-dependent kinase-like 1 isoform X1"/>
    <property type="match status" value="1"/>
</dbReference>
<dbReference type="Gene3D" id="3.30.200.20">
    <property type="entry name" value="Phosphorylase Kinase, domain 1"/>
    <property type="match status" value="1"/>
</dbReference>
<dbReference type="Gene3D" id="1.10.510.10">
    <property type="entry name" value="Transferase(Phosphotransferase) domain 1"/>
    <property type="match status" value="1"/>
</dbReference>
<dbReference type="InterPro" id="IPR050108">
    <property type="entry name" value="CDK"/>
</dbReference>
<dbReference type="InterPro" id="IPR011009">
    <property type="entry name" value="Kinase-like_dom_sf"/>
</dbReference>
<dbReference type="InterPro" id="IPR000719">
    <property type="entry name" value="Prot_kinase_dom"/>
</dbReference>
<dbReference type="InterPro" id="IPR017441">
    <property type="entry name" value="Protein_kinase_ATP_BS"/>
</dbReference>
<dbReference type="InterPro" id="IPR008271">
    <property type="entry name" value="Ser/Thr_kinase_AS"/>
</dbReference>
<dbReference type="PANTHER" id="PTHR24056">
    <property type="entry name" value="CELL DIVISION PROTEIN KINASE"/>
    <property type="match status" value="1"/>
</dbReference>
<dbReference type="PANTHER" id="PTHR24056:SF192">
    <property type="entry name" value="CYCLIN-DEPENDENT KINASE-LIKE 1"/>
    <property type="match status" value="1"/>
</dbReference>
<dbReference type="Pfam" id="PF00069">
    <property type="entry name" value="Pkinase"/>
    <property type="match status" value="1"/>
</dbReference>
<dbReference type="SMART" id="SM00220">
    <property type="entry name" value="S_TKc"/>
    <property type="match status" value="1"/>
</dbReference>
<dbReference type="SUPFAM" id="SSF56112">
    <property type="entry name" value="Protein kinase-like (PK-like)"/>
    <property type="match status" value="1"/>
</dbReference>
<dbReference type="PROSITE" id="PS00107">
    <property type="entry name" value="PROTEIN_KINASE_ATP"/>
    <property type="match status" value="1"/>
</dbReference>
<dbReference type="PROSITE" id="PS50011">
    <property type="entry name" value="PROTEIN_KINASE_DOM"/>
    <property type="match status" value="1"/>
</dbReference>
<dbReference type="PROSITE" id="PS00108">
    <property type="entry name" value="PROTEIN_KINASE_ST"/>
    <property type="match status" value="1"/>
</dbReference>
<accession>Q00532</accession>
<accession>J3KMW1</accession>
<accession>Q2M3A4</accession>
<accession>Q6QUA0</accession>
<accession>Q8WXQ5</accession>
<protein>
    <recommendedName>
        <fullName evidence="9">Cyclin-dependent kinase-like 1</fullName>
        <ecNumber>2.7.11.22</ecNumber>
    </recommendedName>
    <alternativeName>
        <fullName>Protein kinase p42 KKIALRE</fullName>
    </alternativeName>
    <alternativeName>
        <fullName evidence="8">Serine/threonine-protein kinase KKIALRE</fullName>
    </alternativeName>
</protein>
<feature type="chain" id="PRO_0000085810" description="Cyclin-dependent kinase-like 1">
    <location>
        <begin position="1"/>
        <end position="357"/>
    </location>
</feature>
<feature type="domain" description="Protein kinase" evidence="1">
    <location>
        <begin position="4"/>
        <end position="287"/>
    </location>
</feature>
<feature type="short sequence motif" description="[NKR]KIAxRE">
    <location>
        <begin position="45"/>
        <end position="51"/>
    </location>
</feature>
<feature type="active site" description="Proton acceptor" evidence="1 2">
    <location>
        <position position="126"/>
    </location>
</feature>
<feature type="binding site" evidence="1">
    <location>
        <begin position="10"/>
        <end position="18"/>
    </location>
    <ligand>
        <name>ATP</name>
        <dbReference type="ChEBI" id="CHEBI:30616"/>
    </ligand>
</feature>
<feature type="binding site" evidence="1">
    <location>
        <position position="33"/>
    </location>
    <ligand>
        <name>ATP</name>
        <dbReference type="ChEBI" id="CHEBI:30616"/>
    </ligand>
</feature>
<feature type="splice variant" id="VSP_041239" description="In isoform 2." evidence="8">
    <original>M</original>
    <variation>MELSTDTGWNQKSNFPPCDSRVSKEEAQLPFPTPSSYGADSSNQTYAHKSQSEREQHKEVRAVLNHCSGLDGGEESGLCGTSTRIDAGTGNGTDDKVTDQHRHRRCLQGTKGNNRGSEVWGLLLQGNVDRSGGAPSAGVLLRRRGYSCALHGLRKFANLAGLLSRQQDSARGVSHHSRLKIHFKKIYSSMM</variation>
    <location>
        <position position="1"/>
    </location>
</feature>
<feature type="splice variant" id="VSP_041240" description="In isoform 2." evidence="8">
    <original>K</original>
    <variation>KAPSPYAAEPSLCGMKMVRRGKKEFLPAVAEKVDAPSGVGGQGQDSVTVGSLGRRSTYGRKQEKQVRQREGIIYCYVAVLLRIYYFDQGCVAREEEQFQELVFGPFCHIGSYFTGHRTNVRPYILLLSRPSPFKTAAGTYEAGLVILECSYFLAEQEPYCPTQALQQPHPIIGPWALEGGGVESKEDRHPPPKEAPASCEGFLRSAVPKQAYTPFKTSPDKRLSDCVATPPWAPPTPLIISSGVLVAICSMIDPVPEFHSEGLLAKATSGSAGILVWIFLCNDAFIYGKYILRSGVLWVRGLPGFKSEAAALCHKCYSSADPKREQQQDLLQRVKEQSFHSVNGAQARHKGSPSPHQTQEPSWPHPVDPTPGHRWSCLPVPCRAPALLSPWVVDGTGCCGAGGGSDRGGSAAQEPT</variation>
    <location>
        <position position="56"/>
    </location>
</feature>
<feature type="splice variant" id="VSP_041241" description="In isoform 2." evidence="8">
    <original>VPEHLVKSITWQTLQAVNFCHKHN</original>
    <variation>ICNIFVCTGRRLGEHTEALSKKKKKGGGGPFLKLRAASCRITLFKNVGCGLETTGDLSLNSGGGAASRGVAAALRALVCGTELTSSDSPQR</variation>
    <location>
        <begin position="98"/>
        <end position="121"/>
    </location>
</feature>
<feature type="splice variant" id="VSP_041242" description="In isoform 2." evidence="8">
    <original>EPLELKFPNISYPALGLLKGCLHMDPTQRLTCEQLLHHPYFENIREIEDLAKEHNKPTRKTLRKSRKHHCFTETSKLQYLPQLTGSSILPALDNKKYYCDTKKLNYRFPNI</original>
    <variation>SLCLSVTLTEGGLLASGAVKRSQMGSSVSQATSWPHPDIVAETAELDDIAMARQTPVMLRFNRQKEQEKYLSYGA</variation>
    <location>
        <begin position="247"/>
        <end position="357"/>
    </location>
</feature>
<feature type="splice variant" id="VSP_059391" description="In isoform 3.">
    <original>CLHMDPTQR</original>
    <variation>RVPIASRTE</variation>
    <location>
        <begin position="267"/>
        <end position="275"/>
    </location>
</feature>
<feature type="splice variant" id="VSP_059392" description="In isoform 3.">
    <location>
        <begin position="276"/>
        <end position="357"/>
    </location>
</feature>
<feature type="sequence variant" id="VAR_020576" description="In dbSNP:rs11570814." evidence="7">
    <original>L</original>
    <variation>P</variation>
    <location>
        <position position="66"/>
    </location>
</feature>
<feature type="sequence variant" id="VAR_020577" description="In dbSNP:rs7161563." evidence="3 4 5 7">
    <original>Q</original>
    <variation>E</variation>
    <location>
        <position position="274"/>
    </location>
</feature>
<feature type="sequence variant" id="VAR_020578" description="In dbSNP:rs9323183." evidence="4 7">
    <original>L</original>
    <variation>V</variation>
    <location>
        <position position="329"/>
    </location>
</feature>
<feature type="sequence variant" id="VAR_020579" description="In dbSNP:rs11570886." evidence="7">
    <original>K</original>
    <variation>N</variation>
    <location>
        <position position="341"/>
    </location>
</feature>
<feature type="sequence conflict" description="In Ref. 1; CAA47002." evidence="9" ref="1">
    <original>N</original>
    <variation>D</variation>
    <location>
        <position position="301"/>
    </location>
</feature>
<feature type="strand" evidence="12">
    <location>
        <begin position="4"/>
        <end position="12"/>
    </location>
</feature>
<feature type="strand" evidence="12">
    <location>
        <begin position="14"/>
        <end position="23"/>
    </location>
</feature>
<feature type="turn" evidence="12">
    <location>
        <begin position="24"/>
        <end position="26"/>
    </location>
</feature>
<feature type="strand" evidence="12">
    <location>
        <begin position="29"/>
        <end position="35"/>
    </location>
</feature>
<feature type="helix" evidence="12">
    <location>
        <begin position="42"/>
        <end position="57"/>
    </location>
</feature>
<feature type="strand" evidence="12">
    <location>
        <begin position="66"/>
        <end position="72"/>
    </location>
</feature>
<feature type="strand" evidence="12">
    <location>
        <begin position="75"/>
        <end position="81"/>
    </location>
</feature>
<feature type="strand" evidence="12">
    <location>
        <begin position="84"/>
        <end position="86"/>
    </location>
</feature>
<feature type="helix" evidence="12">
    <location>
        <begin position="87"/>
        <end position="93"/>
    </location>
</feature>
<feature type="helix" evidence="12">
    <location>
        <begin position="100"/>
        <end position="119"/>
    </location>
</feature>
<feature type="helix" evidence="12">
    <location>
        <begin position="129"/>
        <end position="131"/>
    </location>
</feature>
<feature type="strand" evidence="12">
    <location>
        <begin position="132"/>
        <end position="134"/>
    </location>
</feature>
<feature type="strand" evidence="12">
    <location>
        <begin position="140"/>
        <end position="142"/>
    </location>
</feature>
<feature type="helix" evidence="12">
    <location>
        <begin position="165"/>
        <end position="167"/>
    </location>
</feature>
<feature type="helix" evidence="12">
    <location>
        <begin position="170"/>
        <end position="174"/>
    </location>
</feature>
<feature type="helix" evidence="12">
    <location>
        <begin position="182"/>
        <end position="197"/>
    </location>
</feature>
<feature type="helix" evidence="12">
    <location>
        <begin position="207"/>
        <end position="218"/>
    </location>
</feature>
<feature type="helix" evidence="12">
    <location>
        <begin position="223"/>
        <end position="230"/>
    </location>
</feature>
<feature type="helix" evidence="12">
    <location>
        <begin position="233"/>
        <end position="235"/>
    </location>
</feature>
<feature type="helix" evidence="12">
    <location>
        <begin position="249"/>
        <end position="252"/>
    </location>
</feature>
<feature type="helix" evidence="12">
    <location>
        <begin position="258"/>
        <end position="267"/>
    </location>
</feature>
<feature type="turn" evidence="12">
    <location>
        <begin position="272"/>
        <end position="274"/>
    </location>
</feature>
<feature type="helix" evidence="12">
    <location>
        <begin position="278"/>
        <end position="282"/>
    </location>
</feature>
<feature type="helix" evidence="12">
    <location>
        <begin position="285"/>
        <end position="287"/>
    </location>
</feature>
<evidence type="ECO:0000255" key="1">
    <source>
        <dbReference type="PROSITE-ProRule" id="PRU00159"/>
    </source>
</evidence>
<evidence type="ECO:0000255" key="2">
    <source>
        <dbReference type="PROSITE-ProRule" id="PRU10027"/>
    </source>
</evidence>
<evidence type="ECO:0000269" key="3">
    <source>
    </source>
</evidence>
<evidence type="ECO:0000269" key="4">
    <source>
    </source>
</evidence>
<evidence type="ECO:0000269" key="5">
    <source>
    </source>
</evidence>
<evidence type="ECO:0000269" key="6">
    <source>
    </source>
</evidence>
<evidence type="ECO:0000269" key="7">
    <source ref="3"/>
</evidence>
<evidence type="ECO:0000303" key="8">
    <source ref="2"/>
</evidence>
<evidence type="ECO:0000305" key="9"/>
<evidence type="ECO:0000312" key="10">
    <source>
        <dbReference type="HGNC" id="HGNC:1781"/>
    </source>
</evidence>
<evidence type="ECO:0007744" key="11">
    <source>
        <dbReference type="PDB" id="4AGU"/>
    </source>
</evidence>
<evidence type="ECO:0007829" key="12">
    <source>
        <dbReference type="PDB" id="4AGU"/>
    </source>
</evidence>
<organism>
    <name type="scientific">Homo sapiens</name>
    <name type="common">Human</name>
    <dbReference type="NCBI Taxonomy" id="9606"/>
    <lineage>
        <taxon>Eukaryota</taxon>
        <taxon>Metazoa</taxon>
        <taxon>Chordata</taxon>
        <taxon>Craniata</taxon>
        <taxon>Vertebrata</taxon>
        <taxon>Euteleostomi</taxon>
        <taxon>Mammalia</taxon>
        <taxon>Eutheria</taxon>
        <taxon>Euarchontoglires</taxon>
        <taxon>Primates</taxon>
        <taxon>Haplorrhini</taxon>
        <taxon>Catarrhini</taxon>
        <taxon>Hominidae</taxon>
        <taxon>Homo</taxon>
    </lineage>
</organism>
<gene>
    <name evidence="10" type="primary">CDKL1</name>
</gene>
<comment type="catalytic activity">
    <reaction>
        <text>L-seryl-[protein] + ATP = O-phospho-L-seryl-[protein] + ADP + H(+)</text>
        <dbReference type="Rhea" id="RHEA:17989"/>
        <dbReference type="Rhea" id="RHEA-COMP:9863"/>
        <dbReference type="Rhea" id="RHEA-COMP:11604"/>
        <dbReference type="ChEBI" id="CHEBI:15378"/>
        <dbReference type="ChEBI" id="CHEBI:29999"/>
        <dbReference type="ChEBI" id="CHEBI:30616"/>
        <dbReference type="ChEBI" id="CHEBI:83421"/>
        <dbReference type="ChEBI" id="CHEBI:456216"/>
        <dbReference type="EC" id="2.7.11.22"/>
    </reaction>
</comment>
<comment type="catalytic activity">
    <reaction>
        <text>L-threonyl-[protein] + ATP = O-phospho-L-threonyl-[protein] + ADP + H(+)</text>
        <dbReference type="Rhea" id="RHEA:46608"/>
        <dbReference type="Rhea" id="RHEA-COMP:11060"/>
        <dbReference type="Rhea" id="RHEA-COMP:11605"/>
        <dbReference type="ChEBI" id="CHEBI:15378"/>
        <dbReference type="ChEBI" id="CHEBI:30013"/>
        <dbReference type="ChEBI" id="CHEBI:30616"/>
        <dbReference type="ChEBI" id="CHEBI:61977"/>
        <dbReference type="ChEBI" id="CHEBI:456216"/>
        <dbReference type="EC" id="2.7.11.22"/>
    </reaction>
</comment>
<comment type="subcellular location">
    <subcellularLocation>
        <location evidence="6">Cytoplasm</location>
    </subcellularLocation>
    <subcellularLocation>
        <location evidence="6">Nucleus</location>
    </subcellularLocation>
</comment>
<comment type="alternative products">
    <event type="alternative splicing"/>
    <isoform>
        <id>Q00532-1</id>
        <name>1</name>
        <sequence type="displayed"/>
    </isoform>
    <isoform>
        <id>Q00532-2</id>
        <name>2</name>
        <sequence type="described" ref="VSP_041239 VSP_041240 VSP_041241 VSP_041242"/>
    </isoform>
    <isoform>
        <id>Q00532-3</id>
        <name>3</name>
        <sequence type="described" ref="VSP_059391 VSP_059392"/>
    </isoform>
</comment>
<comment type="tissue specificity">
    <text evidence="6">Highly expressed in kidney, and to a lower extent in ovary.</text>
</comment>
<comment type="domain">
    <text>The [NKR]KIAxRE motif seems to be a cyclin-binding region.</text>
</comment>
<comment type="similarity">
    <text evidence="9">Belongs to the protein kinase superfamily. CMGC Ser/Thr protein kinase family. CDC2/CDKX subfamily.</text>
</comment>
<comment type="sequence caution" evidence="9">
    <conflict type="erroneous initiation">
        <sequence resource="EMBL-CDS" id="AAI04978"/>
    </conflict>
    <text>Extended N-terminus.</text>
</comment>
<comment type="sequence caution" evidence="9">
    <conflict type="erroneous initiation">
        <sequence resource="EMBL-CDS" id="AAS00095"/>
    </conflict>
    <text>Extended N-terminus.</text>
</comment>
<comment type="sequence caution" evidence="9">
    <conflict type="erroneous initiation">
        <sequence resource="EMBL-CDS" id="CAA47002"/>
    </conflict>
    <text>Extended N-terminus.</text>
</comment>
<proteinExistence type="evidence at protein level"/>
<reference key="1">
    <citation type="journal article" date="1992" name="EMBO J.">
        <title>A family of human cdc2-related protein kinases.</title>
        <authorList>
            <person name="Meyerson M."/>
            <person name="Enders G.H."/>
            <person name="Wu C.-L."/>
            <person name="Su L.-K."/>
            <person name="Gorka C."/>
            <person name="Nelson C."/>
            <person name="Harlow E."/>
            <person name="Tsai L.-H."/>
        </authorList>
    </citation>
    <scope>NUCLEOTIDE SEQUENCE [MRNA] (ISOFORM 1)</scope>
    <scope>VARIANT GLU-274</scope>
</reference>
<reference key="2">
    <citation type="submission" date="2001-06" db="EMBL/GenBank/DDBJ databases">
        <title>The cloning of 2nd splicing version of human serine/threonine-protein kinase KKIALRE (cyclin-dependent kinase like-1).</title>
        <authorList>
            <person name="Hu W.-X."/>
            <person name="Tang L.-J."/>
            <person name="Shi Y.-W."/>
        </authorList>
    </citation>
    <scope>NUCLEOTIDE SEQUENCE [MRNA] (ISOFORM 2)</scope>
</reference>
<reference key="3">
    <citation type="submission" date="2004-01" db="EMBL/GenBank/DDBJ databases">
        <authorList>
            <consortium name="NIEHS SNPs program"/>
        </authorList>
    </citation>
    <scope>NUCLEOTIDE SEQUENCE [GENOMIC DNA] (ISOFORM 1)</scope>
    <scope>VARIANTS PRO-66; GLU-274; VAL-329 AND ASN-341</scope>
</reference>
<reference key="4">
    <citation type="journal article" date="2003" name="Nature">
        <title>The DNA sequence and analysis of human chromosome 14.</title>
        <authorList>
            <person name="Heilig R."/>
            <person name="Eckenberg R."/>
            <person name="Petit J.-L."/>
            <person name="Fonknechten N."/>
            <person name="Da Silva C."/>
            <person name="Cattolico L."/>
            <person name="Levy M."/>
            <person name="Barbe V."/>
            <person name="De Berardinis V."/>
            <person name="Ureta-Vidal A."/>
            <person name="Pelletier E."/>
            <person name="Vico V."/>
            <person name="Anthouard V."/>
            <person name="Rowen L."/>
            <person name="Madan A."/>
            <person name="Qin S."/>
            <person name="Sun H."/>
            <person name="Du H."/>
            <person name="Pepin K."/>
            <person name="Artiguenave F."/>
            <person name="Robert C."/>
            <person name="Cruaud C."/>
            <person name="Bruels T."/>
            <person name="Jaillon O."/>
            <person name="Friedlander L."/>
            <person name="Samson G."/>
            <person name="Brottier P."/>
            <person name="Cure S."/>
            <person name="Segurens B."/>
            <person name="Aniere F."/>
            <person name="Samain S."/>
            <person name="Crespeau H."/>
            <person name="Abbasi N."/>
            <person name="Aiach N."/>
            <person name="Boscus D."/>
            <person name="Dickhoff R."/>
            <person name="Dors M."/>
            <person name="Dubois I."/>
            <person name="Friedman C."/>
            <person name="Gouyvenoux M."/>
            <person name="James R."/>
            <person name="Madan A."/>
            <person name="Mairey-Estrada B."/>
            <person name="Mangenot S."/>
            <person name="Martins N."/>
            <person name="Menard M."/>
            <person name="Oztas S."/>
            <person name="Ratcliffe A."/>
            <person name="Shaffer T."/>
            <person name="Trask B."/>
            <person name="Vacherie B."/>
            <person name="Bellemere C."/>
            <person name="Belser C."/>
            <person name="Besnard-Gonnet M."/>
            <person name="Bartol-Mavel D."/>
            <person name="Boutard M."/>
            <person name="Briez-Silla S."/>
            <person name="Combette S."/>
            <person name="Dufosse-Laurent V."/>
            <person name="Ferron C."/>
            <person name="Lechaplais C."/>
            <person name="Louesse C."/>
            <person name="Muselet D."/>
            <person name="Magdelenat G."/>
            <person name="Pateau E."/>
            <person name="Petit E."/>
            <person name="Sirvain-Trukniewicz P."/>
            <person name="Trybou A."/>
            <person name="Vega-Czarny N."/>
            <person name="Bataille E."/>
            <person name="Bluet E."/>
            <person name="Bordelais I."/>
            <person name="Dubois M."/>
            <person name="Dumont C."/>
            <person name="Guerin T."/>
            <person name="Haffray S."/>
            <person name="Hammadi R."/>
            <person name="Muanga J."/>
            <person name="Pellouin V."/>
            <person name="Robert D."/>
            <person name="Wunderle E."/>
            <person name="Gauguet G."/>
            <person name="Roy A."/>
            <person name="Sainte-Marthe L."/>
            <person name="Verdier J."/>
            <person name="Verdier-Discala C."/>
            <person name="Hillier L.W."/>
            <person name="Fulton L."/>
            <person name="McPherson J."/>
            <person name="Matsuda F."/>
            <person name="Wilson R."/>
            <person name="Scarpelli C."/>
            <person name="Gyapay G."/>
            <person name="Wincker P."/>
            <person name="Saurin W."/>
            <person name="Quetier F."/>
            <person name="Waterston R."/>
            <person name="Hood L."/>
            <person name="Weissenbach J."/>
        </authorList>
    </citation>
    <scope>NUCLEOTIDE SEQUENCE [LARGE SCALE GENOMIC DNA]</scope>
</reference>
<reference key="5">
    <citation type="journal article" date="2004" name="Nat. Genet.">
        <title>Complete sequencing and characterization of 21,243 full-length human cDNAs.</title>
        <authorList>
            <person name="Ota T."/>
            <person name="Suzuki Y."/>
            <person name="Nishikawa T."/>
            <person name="Otsuki T."/>
            <person name="Sugiyama T."/>
            <person name="Irie R."/>
            <person name="Wakamatsu A."/>
            <person name="Hayashi K."/>
            <person name="Sato H."/>
            <person name="Nagai K."/>
            <person name="Kimura K."/>
            <person name="Makita H."/>
            <person name="Sekine M."/>
            <person name="Obayashi M."/>
            <person name="Nishi T."/>
            <person name="Shibahara T."/>
            <person name="Tanaka T."/>
            <person name="Ishii S."/>
            <person name="Yamamoto J."/>
            <person name="Saito K."/>
            <person name="Kawai Y."/>
            <person name="Isono Y."/>
            <person name="Nakamura Y."/>
            <person name="Nagahari K."/>
            <person name="Murakami K."/>
            <person name="Yasuda T."/>
            <person name="Iwayanagi T."/>
            <person name="Wagatsuma M."/>
            <person name="Shiratori A."/>
            <person name="Sudo H."/>
            <person name="Hosoiri T."/>
            <person name="Kaku Y."/>
            <person name="Kodaira H."/>
            <person name="Kondo H."/>
            <person name="Sugawara M."/>
            <person name="Takahashi M."/>
            <person name="Kanda K."/>
            <person name="Yokoi T."/>
            <person name="Furuya T."/>
            <person name="Kikkawa E."/>
            <person name="Omura Y."/>
            <person name="Abe K."/>
            <person name="Kamihara K."/>
            <person name="Katsuta N."/>
            <person name="Sato K."/>
            <person name="Tanikawa M."/>
            <person name="Yamazaki M."/>
            <person name="Ninomiya K."/>
            <person name="Ishibashi T."/>
            <person name="Yamashita H."/>
            <person name="Murakawa K."/>
            <person name="Fujimori K."/>
            <person name="Tanai H."/>
            <person name="Kimata M."/>
            <person name="Watanabe M."/>
            <person name="Hiraoka S."/>
            <person name="Chiba Y."/>
            <person name="Ishida S."/>
            <person name="Ono Y."/>
            <person name="Takiguchi S."/>
            <person name="Watanabe S."/>
            <person name="Yosida M."/>
            <person name="Hotuta T."/>
            <person name="Kusano J."/>
            <person name="Kanehori K."/>
            <person name="Takahashi-Fujii A."/>
            <person name="Hara H."/>
            <person name="Tanase T.-O."/>
            <person name="Nomura Y."/>
            <person name="Togiya S."/>
            <person name="Komai F."/>
            <person name="Hara R."/>
            <person name="Takeuchi K."/>
            <person name="Arita M."/>
            <person name="Imose N."/>
            <person name="Musashino K."/>
            <person name="Yuuki H."/>
            <person name="Oshima A."/>
            <person name="Sasaki N."/>
            <person name="Aotsuka S."/>
            <person name="Yoshikawa Y."/>
            <person name="Matsunawa H."/>
            <person name="Ichihara T."/>
            <person name="Shiohata N."/>
            <person name="Sano S."/>
            <person name="Moriya S."/>
            <person name="Momiyama H."/>
            <person name="Satoh N."/>
            <person name="Takami S."/>
            <person name="Terashima Y."/>
            <person name="Suzuki O."/>
            <person name="Nakagawa S."/>
            <person name="Senoh A."/>
            <person name="Mizoguchi H."/>
            <person name="Goto Y."/>
            <person name="Shimizu F."/>
            <person name="Wakebe H."/>
            <person name="Hishigaki H."/>
            <person name="Watanabe T."/>
            <person name="Sugiyama A."/>
            <person name="Takemoto M."/>
            <person name="Kawakami B."/>
            <person name="Yamazaki M."/>
            <person name="Watanabe K."/>
            <person name="Kumagai A."/>
            <person name="Itakura S."/>
            <person name="Fukuzumi Y."/>
            <person name="Fujimori Y."/>
            <person name="Komiyama M."/>
            <person name="Tashiro H."/>
            <person name="Tanigami A."/>
            <person name="Fujiwara T."/>
            <person name="Ono T."/>
            <person name="Yamada K."/>
            <person name="Fujii Y."/>
            <person name="Ozaki K."/>
            <person name="Hirao M."/>
            <person name="Ohmori Y."/>
            <person name="Kawabata A."/>
            <person name="Hikiji T."/>
            <person name="Kobatake N."/>
            <person name="Inagaki H."/>
            <person name="Ikema Y."/>
            <person name="Okamoto S."/>
            <person name="Okitani R."/>
            <person name="Kawakami T."/>
            <person name="Noguchi S."/>
            <person name="Itoh T."/>
            <person name="Shigeta K."/>
            <person name="Senba T."/>
            <person name="Matsumura K."/>
            <person name="Nakajima Y."/>
            <person name="Mizuno T."/>
            <person name="Morinaga M."/>
            <person name="Sasaki M."/>
            <person name="Togashi T."/>
            <person name="Oyama M."/>
            <person name="Hata H."/>
            <person name="Watanabe M."/>
            <person name="Komatsu T."/>
            <person name="Mizushima-Sugano J."/>
            <person name="Satoh T."/>
            <person name="Shirai Y."/>
            <person name="Takahashi Y."/>
            <person name="Nakagawa K."/>
            <person name="Okumura K."/>
            <person name="Nagase T."/>
            <person name="Nomura N."/>
            <person name="Kikuchi H."/>
            <person name="Masuho Y."/>
            <person name="Yamashita R."/>
            <person name="Nakai K."/>
            <person name="Yada T."/>
            <person name="Nakamura Y."/>
            <person name="Ohara O."/>
            <person name="Isogai T."/>
            <person name="Sugano S."/>
        </authorList>
    </citation>
    <scope>NUCLEOTIDE SEQUENCE [LARGE SCALE MRNA] (ISOFORM 3)</scope>
</reference>
<reference key="6">
    <citation type="journal article" date="2004" name="Genome Res.">
        <title>The status, quality, and expansion of the NIH full-length cDNA project: the Mammalian Gene Collection (MGC).</title>
        <authorList>
            <consortium name="The MGC Project Team"/>
        </authorList>
    </citation>
    <scope>NUCLEOTIDE SEQUENCE [LARGE SCALE MRNA] (ISOFORM 1)</scope>
    <source>
        <tissue>Cerebellum</tissue>
    </source>
</reference>
<reference key="7">
    <citation type="journal article" date="1996" name="Oncogene">
        <title>Molecular cloning of the epidermal growth factor-stimulated protein kinase p56 KKIAMRE.</title>
        <authorList>
            <person name="Taglienti C.A."/>
            <person name="Wysk M."/>
            <person name="Davis R.J."/>
        </authorList>
    </citation>
    <scope>TISSUE SPECIFICITY</scope>
    <scope>SUBCELLULAR LOCATION</scope>
</reference>
<reference evidence="11" key="8">
    <citation type="journal article" date="2018" name="Cell Rep.">
        <title>CDKL Family Kinases Have Evolved Distinct Structural Features and Ciliary Function.</title>
        <authorList>
            <person name="Canning P."/>
            <person name="Park K."/>
            <person name="Goncalves J."/>
            <person name="Li C."/>
            <person name="Howard C.J."/>
            <person name="Sharpe T.D."/>
            <person name="Holt L.J."/>
            <person name="Pelletier L."/>
            <person name="Bullock A.N."/>
            <person name="Leroux M.R."/>
        </authorList>
    </citation>
    <scope>X-RAY CRYSTALLOGRAPHY (2.40 ANGSTROMS) OF 1-300 OF VARIANT GLU-274 IN COMPLEX WITH SYNTHETIC INHIBITOR</scope>
</reference>
<reference key="9">
    <citation type="journal article" date="2007" name="Nature">
        <title>Patterns of somatic mutation in human cancer genomes.</title>
        <authorList>
            <person name="Greenman C."/>
            <person name="Stephens P."/>
            <person name="Smith R."/>
            <person name="Dalgliesh G.L."/>
            <person name="Hunter C."/>
            <person name="Bignell G."/>
            <person name="Davies H."/>
            <person name="Teague J."/>
            <person name="Butler A."/>
            <person name="Stevens C."/>
            <person name="Edkins S."/>
            <person name="O'Meara S."/>
            <person name="Vastrik I."/>
            <person name="Schmidt E.E."/>
            <person name="Avis T."/>
            <person name="Barthorpe S."/>
            <person name="Bhamra G."/>
            <person name="Buck G."/>
            <person name="Choudhury B."/>
            <person name="Clements J."/>
            <person name="Cole J."/>
            <person name="Dicks E."/>
            <person name="Forbes S."/>
            <person name="Gray K."/>
            <person name="Halliday K."/>
            <person name="Harrison R."/>
            <person name="Hills K."/>
            <person name="Hinton J."/>
            <person name="Jenkinson A."/>
            <person name="Jones D."/>
            <person name="Menzies A."/>
            <person name="Mironenko T."/>
            <person name="Perry J."/>
            <person name="Raine K."/>
            <person name="Richardson D."/>
            <person name="Shepherd R."/>
            <person name="Small A."/>
            <person name="Tofts C."/>
            <person name="Varian J."/>
            <person name="Webb T."/>
            <person name="West S."/>
            <person name="Widaa S."/>
            <person name="Yates A."/>
            <person name="Cahill D.P."/>
            <person name="Louis D.N."/>
            <person name="Goldstraw P."/>
            <person name="Nicholson A.G."/>
            <person name="Brasseur F."/>
            <person name="Looijenga L."/>
            <person name="Weber B.L."/>
            <person name="Chiew Y.-E."/>
            <person name="DeFazio A."/>
            <person name="Greaves M.F."/>
            <person name="Green A.R."/>
            <person name="Campbell P."/>
            <person name="Birney E."/>
            <person name="Easton D.F."/>
            <person name="Chenevix-Trench G."/>
            <person name="Tan M.-H."/>
            <person name="Khoo S.K."/>
            <person name="Teh B.T."/>
            <person name="Yuen S.T."/>
            <person name="Leung S.Y."/>
            <person name="Wooster R."/>
            <person name="Futreal P.A."/>
            <person name="Stratton M.R."/>
        </authorList>
    </citation>
    <scope>VARIANTS [LARGE SCALE ANALYSIS] GLU-274 AND VAL-329</scope>
</reference>
<keyword id="KW-0002">3D-structure</keyword>
<keyword id="KW-0025">Alternative splicing</keyword>
<keyword id="KW-0067">ATP-binding</keyword>
<keyword id="KW-0963">Cytoplasm</keyword>
<keyword id="KW-0418">Kinase</keyword>
<keyword id="KW-0547">Nucleotide-binding</keyword>
<keyword id="KW-0539">Nucleus</keyword>
<keyword id="KW-1267">Proteomics identification</keyword>
<keyword id="KW-1185">Reference proteome</keyword>
<keyword id="KW-0723">Serine/threonine-protein kinase</keyword>
<keyword id="KW-0808">Transferase</keyword>
<sequence>MEKYEKIGKIGEGSYGVVFKCRNRDTGQIVAIKKFLESEDDPVIKKIALREIRMLKQLKHPNLVNLLEVFRRKRRLHLVFEYCDHTVLHELDRYQRGVPEHLVKSITWQTLQAVNFCHKHNCIHRDVKPENILITKHSVIKLCDFGFARLLTGPSDYYTDYVATRWYRSPELLVGDTQYGPPVDVWAIGCVFAELLSGVPLWPGKSDVDQLYLIRKTLGDLIPRHQQVFSTNQYFSGVKIPDPEDMEPLELKFPNISYPALGLLKGCLHMDPTQRLTCEQLLHHPYFENIREIEDLAKEHNKPTRKTLRKSRKHHCFTETSKLQYLPQLTGSSILPALDNKKYYCDTKKLNYRFPNI</sequence>